<proteinExistence type="inferred from homology"/>
<organism>
    <name type="scientific">Cereibacter sphaeroides (strain ATCC 17029 / ATH 2.4.9)</name>
    <name type="common">Rhodobacter sphaeroides</name>
    <dbReference type="NCBI Taxonomy" id="349101"/>
    <lineage>
        <taxon>Bacteria</taxon>
        <taxon>Pseudomonadati</taxon>
        <taxon>Pseudomonadota</taxon>
        <taxon>Alphaproteobacteria</taxon>
        <taxon>Rhodobacterales</taxon>
        <taxon>Paracoccaceae</taxon>
        <taxon>Cereibacter</taxon>
    </lineage>
</organism>
<feature type="chain" id="PRO_0000350363" description="Dual-specificity RNA methyltransferase RlmN">
    <location>
        <begin position="1"/>
        <end position="392"/>
    </location>
</feature>
<feature type="domain" description="Radical SAM core" evidence="2">
    <location>
        <begin position="122"/>
        <end position="364"/>
    </location>
</feature>
<feature type="active site" description="Proton acceptor" evidence="1">
    <location>
        <position position="116"/>
    </location>
</feature>
<feature type="active site" description="S-methylcysteine intermediate" evidence="1">
    <location>
        <position position="369"/>
    </location>
</feature>
<feature type="binding site" evidence="1">
    <location>
        <position position="136"/>
    </location>
    <ligand>
        <name>[4Fe-4S] cluster</name>
        <dbReference type="ChEBI" id="CHEBI:49883"/>
        <note>4Fe-4S-S-AdoMet</note>
    </ligand>
</feature>
<feature type="binding site" evidence="1">
    <location>
        <position position="140"/>
    </location>
    <ligand>
        <name>[4Fe-4S] cluster</name>
        <dbReference type="ChEBI" id="CHEBI:49883"/>
        <note>4Fe-4S-S-AdoMet</note>
    </ligand>
</feature>
<feature type="binding site" evidence="1">
    <location>
        <position position="143"/>
    </location>
    <ligand>
        <name>[4Fe-4S] cluster</name>
        <dbReference type="ChEBI" id="CHEBI:49883"/>
        <note>4Fe-4S-S-AdoMet</note>
    </ligand>
</feature>
<feature type="binding site" evidence="1">
    <location>
        <begin position="195"/>
        <end position="196"/>
    </location>
    <ligand>
        <name>S-adenosyl-L-methionine</name>
        <dbReference type="ChEBI" id="CHEBI:59789"/>
    </ligand>
</feature>
<feature type="binding site" evidence="1">
    <location>
        <position position="227"/>
    </location>
    <ligand>
        <name>S-adenosyl-L-methionine</name>
        <dbReference type="ChEBI" id="CHEBI:59789"/>
    </ligand>
</feature>
<feature type="binding site" evidence="1">
    <location>
        <begin position="249"/>
        <end position="251"/>
    </location>
    <ligand>
        <name>S-adenosyl-L-methionine</name>
        <dbReference type="ChEBI" id="CHEBI:59789"/>
    </ligand>
</feature>
<feature type="binding site" evidence="1">
    <location>
        <position position="326"/>
    </location>
    <ligand>
        <name>S-adenosyl-L-methionine</name>
        <dbReference type="ChEBI" id="CHEBI:59789"/>
    </ligand>
</feature>
<feature type="disulfide bond" description="(transient)" evidence="1">
    <location>
        <begin position="129"/>
        <end position="369"/>
    </location>
</feature>
<comment type="function">
    <text evidence="1">Specifically methylates position 2 of adenine 2503 in 23S rRNA and position 2 of adenine 37 in tRNAs. m2A2503 modification seems to play a crucial role in the proofreading step occurring at the peptidyl transferase center and thus would serve to optimize ribosomal fidelity.</text>
</comment>
<comment type="catalytic activity">
    <reaction evidence="1">
        <text>adenosine(2503) in 23S rRNA + 2 reduced [2Fe-2S]-[ferredoxin] + 2 S-adenosyl-L-methionine = 2-methyladenosine(2503) in 23S rRNA + 5'-deoxyadenosine + L-methionine + 2 oxidized [2Fe-2S]-[ferredoxin] + S-adenosyl-L-homocysteine</text>
        <dbReference type="Rhea" id="RHEA:42916"/>
        <dbReference type="Rhea" id="RHEA-COMP:10000"/>
        <dbReference type="Rhea" id="RHEA-COMP:10001"/>
        <dbReference type="Rhea" id="RHEA-COMP:10152"/>
        <dbReference type="Rhea" id="RHEA-COMP:10282"/>
        <dbReference type="ChEBI" id="CHEBI:17319"/>
        <dbReference type="ChEBI" id="CHEBI:33737"/>
        <dbReference type="ChEBI" id="CHEBI:33738"/>
        <dbReference type="ChEBI" id="CHEBI:57844"/>
        <dbReference type="ChEBI" id="CHEBI:57856"/>
        <dbReference type="ChEBI" id="CHEBI:59789"/>
        <dbReference type="ChEBI" id="CHEBI:74411"/>
        <dbReference type="ChEBI" id="CHEBI:74497"/>
        <dbReference type="EC" id="2.1.1.192"/>
    </reaction>
</comment>
<comment type="catalytic activity">
    <reaction evidence="1">
        <text>adenosine(37) in tRNA + 2 reduced [2Fe-2S]-[ferredoxin] + 2 S-adenosyl-L-methionine = 2-methyladenosine(37) in tRNA + 5'-deoxyadenosine + L-methionine + 2 oxidized [2Fe-2S]-[ferredoxin] + S-adenosyl-L-homocysteine</text>
        <dbReference type="Rhea" id="RHEA:43332"/>
        <dbReference type="Rhea" id="RHEA-COMP:10000"/>
        <dbReference type="Rhea" id="RHEA-COMP:10001"/>
        <dbReference type="Rhea" id="RHEA-COMP:10162"/>
        <dbReference type="Rhea" id="RHEA-COMP:10485"/>
        <dbReference type="ChEBI" id="CHEBI:17319"/>
        <dbReference type="ChEBI" id="CHEBI:33737"/>
        <dbReference type="ChEBI" id="CHEBI:33738"/>
        <dbReference type="ChEBI" id="CHEBI:57844"/>
        <dbReference type="ChEBI" id="CHEBI:57856"/>
        <dbReference type="ChEBI" id="CHEBI:59789"/>
        <dbReference type="ChEBI" id="CHEBI:74411"/>
        <dbReference type="ChEBI" id="CHEBI:74497"/>
        <dbReference type="EC" id="2.1.1.192"/>
    </reaction>
</comment>
<comment type="cofactor">
    <cofactor evidence="1">
        <name>[4Fe-4S] cluster</name>
        <dbReference type="ChEBI" id="CHEBI:49883"/>
    </cofactor>
    <text evidence="1">Binds 1 [4Fe-4S] cluster. The cluster is coordinated with 3 cysteines and an exchangeable S-adenosyl-L-methionine.</text>
</comment>
<comment type="subcellular location">
    <subcellularLocation>
        <location evidence="1">Cytoplasm</location>
    </subcellularLocation>
</comment>
<comment type="miscellaneous">
    <text evidence="1">Reaction proceeds by a ping-pong mechanism involving intermediate methylation of a conserved cysteine residue.</text>
</comment>
<comment type="similarity">
    <text evidence="1">Belongs to the radical SAM superfamily. RlmN family.</text>
</comment>
<accession>A3PFQ4</accession>
<sequence>MTANAPITQDVMTLPRKLPEGGPVNIVGLTREELLAALVAAGTPERQAKMRAGQVWQWVYHWGVRDFAQMTNLAKDYRALLAEHFAIVLPEVVTRQISADGTRKYLIRIAGGHEVETVYIPEEGRGTLCVSSQVGCTLTCSFCHTGTQKLVRNLTAAEIVGQLMLVRDDLGEWPERGAPKDETRLVSNLVLMGMGEPLYNFENVRNAMKVVMDGEGLSLSRRRITLSTSGVVPEIARTAEEIGCQLAISFHATTDEVRDILVPINKRWNIRTLLDSLRDYPRLSNSERITFEYVMLDGVNDTDADARRLVKLISGIPSKINLIPFNEWPGAPYRRSTPERIAAFADIIYKAGYASPIRTPRGEDIMAACGQLKSATERARKSRAQIAAETGL</sequence>
<keyword id="KW-0004">4Fe-4S</keyword>
<keyword id="KW-0963">Cytoplasm</keyword>
<keyword id="KW-1015">Disulfide bond</keyword>
<keyword id="KW-0408">Iron</keyword>
<keyword id="KW-0411">Iron-sulfur</keyword>
<keyword id="KW-0479">Metal-binding</keyword>
<keyword id="KW-0489">Methyltransferase</keyword>
<keyword id="KW-0698">rRNA processing</keyword>
<keyword id="KW-0949">S-adenosyl-L-methionine</keyword>
<keyword id="KW-0808">Transferase</keyword>
<keyword id="KW-0819">tRNA processing</keyword>
<reference key="1">
    <citation type="submission" date="2007-02" db="EMBL/GenBank/DDBJ databases">
        <title>Complete sequence of chromosome 1 of Rhodobacter sphaeroides ATCC 17029.</title>
        <authorList>
            <person name="Copeland A."/>
            <person name="Lucas S."/>
            <person name="Lapidus A."/>
            <person name="Barry K."/>
            <person name="Detter J.C."/>
            <person name="Glavina del Rio T."/>
            <person name="Hammon N."/>
            <person name="Israni S."/>
            <person name="Dalin E."/>
            <person name="Tice H."/>
            <person name="Pitluck S."/>
            <person name="Kiss H."/>
            <person name="Brettin T."/>
            <person name="Bruce D."/>
            <person name="Han C."/>
            <person name="Tapia R."/>
            <person name="Gilna P."/>
            <person name="Schmutz J."/>
            <person name="Larimer F."/>
            <person name="Land M."/>
            <person name="Hauser L."/>
            <person name="Kyrpides N."/>
            <person name="Mikhailova N."/>
            <person name="Richardson P."/>
            <person name="Mackenzie C."/>
            <person name="Choudhary M."/>
            <person name="Donohue T.J."/>
            <person name="Kaplan S."/>
        </authorList>
    </citation>
    <scope>NUCLEOTIDE SEQUENCE [LARGE SCALE GENOMIC DNA]</scope>
    <source>
        <strain>ATCC 17029 / ATH 2.4.9</strain>
    </source>
</reference>
<gene>
    <name evidence="1" type="primary">rlmN</name>
    <name type="ordered locus">Rsph17029_0050</name>
</gene>
<dbReference type="EC" id="2.1.1.192" evidence="1"/>
<dbReference type="EMBL" id="CP000577">
    <property type="protein sequence ID" value="ABN75170.1"/>
    <property type="molecule type" value="Genomic_DNA"/>
</dbReference>
<dbReference type="RefSeq" id="WP_002721983.1">
    <property type="nucleotide sequence ID" value="NC_009049.1"/>
</dbReference>
<dbReference type="SMR" id="A3PFQ4"/>
<dbReference type="GeneID" id="67448152"/>
<dbReference type="KEGG" id="rsh:Rsph17029_0050"/>
<dbReference type="HOGENOM" id="CLU_029101_2_0_5"/>
<dbReference type="GO" id="GO:0005737">
    <property type="term" value="C:cytoplasm"/>
    <property type="evidence" value="ECO:0007669"/>
    <property type="project" value="UniProtKB-SubCell"/>
</dbReference>
<dbReference type="GO" id="GO:0051539">
    <property type="term" value="F:4 iron, 4 sulfur cluster binding"/>
    <property type="evidence" value="ECO:0007669"/>
    <property type="project" value="UniProtKB-UniRule"/>
</dbReference>
<dbReference type="GO" id="GO:0046872">
    <property type="term" value="F:metal ion binding"/>
    <property type="evidence" value="ECO:0007669"/>
    <property type="project" value="UniProtKB-KW"/>
</dbReference>
<dbReference type="GO" id="GO:0070040">
    <property type="term" value="F:rRNA (adenine(2503)-C2-)-methyltransferase activity"/>
    <property type="evidence" value="ECO:0007669"/>
    <property type="project" value="UniProtKB-UniRule"/>
</dbReference>
<dbReference type="GO" id="GO:0019843">
    <property type="term" value="F:rRNA binding"/>
    <property type="evidence" value="ECO:0007669"/>
    <property type="project" value="UniProtKB-UniRule"/>
</dbReference>
<dbReference type="GO" id="GO:0002935">
    <property type="term" value="F:tRNA (adenine(37)-C2)-methyltransferase activity"/>
    <property type="evidence" value="ECO:0007669"/>
    <property type="project" value="UniProtKB-UniRule"/>
</dbReference>
<dbReference type="GO" id="GO:0000049">
    <property type="term" value="F:tRNA binding"/>
    <property type="evidence" value="ECO:0007669"/>
    <property type="project" value="UniProtKB-UniRule"/>
</dbReference>
<dbReference type="GO" id="GO:0070475">
    <property type="term" value="P:rRNA base methylation"/>
    <property type="evidence" value="ECO:0007669"/>
    <property type="project" value="UniProtKB-UniRule"/>
</dbReference>
<dbReference type="GO" id="GO:0030488">
    <property type="term" value="P:tRNA methylation"/>
    <property type="evidence" value="ECO:0007669"/>
    <property type="project" value="UniProtKB-UniRule"/>
</dbReference>
<dbReference type="CDD" id="cd01335">
    <property type="entry name" value="Radical_SAM"/>
    <property type="match status" value="1"/>
</dbReference>
<dbReference type="FunFam" id="3.20.20.70:FF:000008">
    <property type="entry name" value="Dual-specificity RNA methyltransferase RlmN"/>
    <property type="match status" value="1"/>
</dbReference>
<dbReference type="Gene3D" id="1.10.150.530">
    <property type="match status" value="1"/>
</dbReference>
<dbReference type="Gene3D" id="3.20.20.70">
    <property type="entry name" value="Aldolase class I"/>
    <property type="match status" value="1"/>
</dbReference>
<dbReference type="HAMAP" id="MF_01849">
    <property type="entry name" value="RNA_methyltr_RlmN"/>
    <property type="match status" value="1"/>
</dbReference>
<dbReference type="InterPro" id="IPR013785">
    <property type="entry name" value="Aldolase_TIM"/>
</dbReference>
<dbReference type="InterPro" id="IPR040072">
    <property type="entry name" value="Methyltransferase_A"/>
</dbReference>
<dbReference type="InterPro" id="IPR048641">
    <property type="entry name" value="RlmN_N"/>
</dbReference>
<dbReference type="InterPro" id="IPR027492">
    <property type="entry name" value="RNA_MTrfase_RlmN"/>
</dbReference>
<dbReference type="InterPro" id="IPR004383">
    <property type="entry name" value="rRNA_lsu_MTrfase_RlmN/Cfr"/>
</dbReference>
<dbReference type="InterPro" id="IPR007197">
    <property type="entry name" value="rSAM"/>
</dbReference>
<dbReference type="NCBIfam" id="TIGR00048">
    <property type="entry name" value="rRNA_mod_RlmN"/>
    <property type="match status" value="1"/>
</dbReference>
<dbReference type="PANTHER" id="PTHR30544">
    <property type="entry name" value="23S RRNA METHYLTRANSFERASE"/>
    <property type="match status" value="1"/>
</dbReference>
<dbReference type="PANTHER" id="PTHR30544:SF5">
    <property type="entry name" value="RADICAL SAM CORE DOMAIN-CONTAINING PROTEIN"/>
    <property type="match status" value="1"/>
</dbReference>
<dbReference type="Pfam" id="PF04055">
    <property type="entry name" value="Radical_SAM"/>
    <property type="match status" value="1"/>
</dbReference>
<dbReference type="Pfam" id="PF21016">
    <property type="entry name" value="RlmN_N"/>
    <property type="match status" value="1"/>
</dbReference>
<dbReference type="PIRSF" id="PIRSF006004">
    <property type="entry name" value="CHP00048"/>
    <property type="match status" value="1"/>
</dbReference>
<dbReference type="SFLD" id="SFLDF00275">
    <property type="entry name" value="adenosine_C2_methyltransferase"/>
    <property type="match status" value="1"/>
</dbReference>
<dbReference type="SFLD" id="SFLDG01062">
    <property type="entry name" value="methyltransferase_(Class_A)"/>
    <property type="match status" value="1"/>
</dbReference>
<dbReference type="SUPFAM" id="SSF102114">
    <property type="entry name" value="Radical SAM enzymes"/>
    <property type="match status" value="1"/>
</dbReference>
<dbReference type="PROSITE" id="PS51918">
    <property type="entry name" value="RADICAL_SAM"/>
    <property type="match status" value="1"/>
</dbReference>
<protein>
    <recommendedName>
        <fullName evidence="1">Dual-specificity RNA methyltransferase RlmN</fullName>
        <ecNumber evidence="1">2.1.1.192</ecNumber>
    </recommendedName>
    <alternativeName>
        <fullName evidence="1">23S rRNA (adenine(2503)-C(2))-methyltransferase</fullName>
    </alternativeName>
    <alternativeName>
        <fullName evidence="1">23S rRNA m2A2503 methyltransferase</fullName>
    </alternativeName>
    <alternativeName>
        <fullName evidence="1">Ribosomal RNA large subunit methyltransferase N</fullName>
    </alternativeName>
    <alternativeName>
        <fullName evidence="1">tRNA (adenine(37)-C(2))-methyltransferase</fullName>
    </alternativeName>
    <alternativeName>
        <fullName evidence="1">tRNA m2A37 methyltransferase</fullName>
    </alternativeName>
</protein>
<name>RLMN_CERS1</name>
<evidence type="ECO:0000255" key="1">
    <source>
        <dbReference type="HAMAP-Rule" id="MF_01849"/>
    </source>
</evidence>
<evidence type="ECO:0000255" key="2">
    <source>
        <dbReference type="PROSITE-ProRule" id="PRU01266"/>
    </source>
</evidence>